<dbReference type="EMBL" id="AE006468">
    <property type="protein sequence ID" value="AAL22209.1"/>
    <property type="molecule type" value="Genomic_DNA"/>
</dbReference>
<dbReference type="RefSeq" id="WP_000382926.1">
    <property type="nucleotide sequence ID" value="NC_003197.2"/>
</dbReference>
<dbReference type="SMR" id="P67735"/>
<dbReference type="STRING" id="99287.STM3340"/>
<dbReference type="PaxDb" id="99287-STM3340"/>
<dbReference type="KEGG" id="stm:STM3340"/>
<dbReference type="PATRIC" id="fig|99287.12.peg.3541"/>
<dbReference type="HOGENOM" id="CLU_017584_9_1_6"/>
<dbReference type="OMA" id="QMVSNPI"/>
<dbReference type="PhylomeDB" id="P67735"/>
<dbReference type="BioCyc" id="SENT99287:STM3340-MONOMER"/>
<dbReference type="Proteomes" id="UP000001014">
    <property type="component" value="Chromosome"/>
</dbReference>
<dbReference type="GO" id="GO:0003677">
    <property type="term" value="F:DNA binding"/>
    <property type="evidence" value="ECO:0007669"/>
    <property type="project" value="UniProtKB-KW"/>
</dbReference>
<dbReference type="GO" id="GO:0003700">
    <property type="term" value="F:DNA-binding transcription factor activity"/>
    <property type="evidence" value="ECO:0007669"/>
    <property type="project" value="UniProtKB-UniRule"/>
</dbReference>
<dbReference type="GO" id="GO:0045892">
    <property type="term" value="P:negative regulation of DNA-templated transcription"/>
    <property type="evidence" value="ECO:0007669"/>
    <property type="project" value="UniProtKB-UniRule"/>
</dbReference>
<dbReference type="CDD" id="cd07377">
    <property type="entry name" value="WHTH_GntR"/>
    <property type="match status" value="1"/>
</dbReference>
<dbReference type="FunFam" id="1.10.10.10:FF:000150">
    <property type="entry name" value="HTH-type transcriptional repressor NanR"/>
    <property type="match status" value="1"/>
</dbReference>
<dbReference type="Gene3D" id="1.20.120.530">
    <property type="entry name" value="GntR ligand-binding domain-like"/>
    <property type="match status" value="1"/>
</dbReference>
<dbReference type="Gene3D" id="1.10.10.10">
    <property type="entry name" value="Winged helix-like DNA-binding domain superfamily/Winged helix DNA-binding domain"/>
    <property type="match status" value="1"/>
</dbReference>
<dbReference type="HAMAP" id="MF_01236">
    <property type="entry name" value="HTH_NanR"/>
    <property type="match status" value="1"/>
</dbReference>
<dbReference type="InterPro" id="IPR011711">
    <property type="entry name" value="GntR_C"/>
</dbReference>
<dbReference type="InterPro" id="IPR008920">
    <property type="entry name" value="TF_FadR/GntR_C"/>
</dbReference>
<dbReference type="InterPro" id="IPR000524">
    <property type="entry name" value="Tscrpt_reg_HTH_GntR"/>
</dbReference>
<dbReference type="InterPro" id="IPR023730">
    <property type="entry name" value="Tscrpt_reg_NanR"/>
</dbReference>
<dbReference type="InterPro" id="IPR036388">
    <property type="entry name" value="WH-like_DNA-bd_sf"/>
</dbReference>
<dbReference type="InterPro" id="IPR036390">
    <property type="entry name" value="WH_DNA-bd_sf"/>
</dbReference>
<dbReference type="NCBIfam" id="NF003011">
    <property type="entry name" value="PRK03837.1"/>
    <property type="match status" value="1"/>
</dbReference>
<dbReference type="PANTHER" id="PTHR43537:SF53">
    <property type="entry name" value="HTH-TYPE TRANSCRIPTIONAL REPRESSOR NANR"/>
    <property type="match status" value="1"/>
</dbReference>
<dbReference type="PANTHER" id="PTHR43537">
    <property type="entry name" value="TRANSCRIPTIONAL REGULATOR, GNTR FAMILY"/>
    <property type="match status" value="1"/>
</dbReference>
<dbReference type="Pfam" id="PF07729">
    <property type="entry name" value="FCD"/>
    <property type="match status" value="1"/>
</dbReference>
<dbReference type="Pfam" id="PF00392">
    <property type="entry name" value="GntR"/>
    <property type="match status" value="1"/>
</dbReference>
<dbReference type="PRINTS" id="PR00035">
    <property type="entry name" value="HTHGNTR"/>
</dbReference>
<dbReference type="SMART" id="SM00895">
    <property type="entry name" value="FCD"/>
    <property type="match status" value="1"/>
</dbReference>
<dbReference type="SMART" id="SM00345">
    <property type="entry name" value="HTH_GNTR"/>
    <property type="match status" value="1"/>
</dbReference>
<dbReference type="SUPFAM" id="SSF48008">
    <property type="entry name" value="GntR ligand-binding domain-like"/>
    <property type="match status" value="1"/>
</dbReference>
<dbReference type="SUPFAM" id="SSF46785">
    <property type="entry name" value="Winged helix' DNA-binding domain"/>
    <property type="match status" value="1"/>
</dbReference>
<dbReference type="PROSITE" id="PS50949">
    <property type="entry name" value="HTH_GNTR"/>
    <property type="match status" value="1"/>
</dbReference>
<gene>
    <name evidence="1" type="primary">nanR</name>
    <name type="ordered locus">STM3340</name>
</gene>
<name>NANR_SALTY</name>
<reference key="1">
    <citation type="journal article" date="2001" name="Nature">
        <title>Complete genome sequence of Salmonella enterica serovar Typhimurium LT2.</title>
        <authorList>
            <person name="McClelland M."/>
            <person name="Sanderson K.E."/>
            <person name="Spieth J."/>
            <person name="Clifton S.W."/>
            <person name="Latreille P."/>
            <person name="Courtney L."/>
            <person name="Porwollik S."/>
            <person name="Ali J."/>
            <person name="Dante M."/>
            <person name="Du F."/>
            <person name="Hou S."/>
            <person name="Layman D."/>
            <person name="Leonard S."/>
            <person name="Nguyen C."/>
            <person name="Scott K."/>
            <person name="Holmes A."/>
            <person name="Grewal N."/>
            <person name="Mulvaney E."/>
            <person name="Ryan E."/>
            <person name="Sun H."/>
            <person name="Florea L."/>
            <person name="Miller W."/>
            <person name="Stoneking T."/>
            <person name="Nhan M."/>
            <person name="Waterston R."/>
            <person name="Wilson R.K."/>
        </authorList>
    </citation>
    <scope>NUCLEOTIDE SEQUENCE [LARGE SCALE GENOMIC DNA]</scope>
    <source>
        <strain>LT2 / SGSC1412 / ATCC 700720</strain>
    </source>
</reference>
<organism>
    <name type="scientific">Salmonella typhimurium (strain LT2 / SGSC1412 / ATCC 700720)</name>
    <dbReference type="NCBI Taxonomy" id="99287"/>
    <lineage>
        <taxon>Bacteria</taxon>
        <taxon>Pseudomonadati</taxon>
        <taxon>Pseudomonadota</taxon>
        <taxon>Gammaproteobacteria</taxon>
        <taxon>Enterobacterales</taxon>
        <taxon>Enterobacteriaceae</taxon>
        <taxon>Salmonella</taxon>
    </lineage>
</organism>
<comment type="function">
    <text evidence="1">Transcriptional repressor that controls expression of the genes required for the catabolism of sialic acids.</text>
</comment>
<comment type="similarity">
    <text evidence="1">Belongs to the NanR family.</text>
</comment>
<keyword id="KW-0238">DNA-binding</keyword>
<keyword id="KW-1185">Reference proteome</keyword>
<keyword id="KW-0678">Repressor</keyword>
<keyword id="KW-0804">Transcription</keyword>
<keyword id="KW-0805">Transcription regulation</keyword>
<evidence type="ECO:0000255" key="1">
    <source>
        <dbReference type="HAMAP-Rule" id="MF_01236"/>
    </source>
</evidence>
<evidence type="ECO:0000256" key="2">
    <source>
        <dbReference type="SAM" id="MobiDB-lite"/>
    </source>
</evidence>
<protein>
    <recommendedName>
        <fullName evidence="1">HTH-type transcriptional repressor NanR</fullName>
    </recommendedName>
</protein>
<sequence length="263" mass="29803">MDVMNAFDSQAEDSPTSLGRSLRRRPLARKKLSEMVEEELEQMIRRHEFGEGEQLPSERELMAFFNVGRPSVREALAALKRKGLVQINNGERARVSRPSADTIISELSGMAKDFLTHPGGIAHFEQLRLFFESSLVRYAAEHATDEQIALLTKALEINSQSLDDNALFIRSDVEFHRVLAEIPGNPIFMAIHVALLDWLIAARPSVPDRELHEHNNVSYQQHIVIVDAIRQRDPDKADRALQTHLNSVSATWHALGKKSQKMR</sequence>
<feature type="chain" id="PRO_0000050659" description="HTH-type transcriptional repressor NanR">
    <location>
        <begin position="1"/>
        <end position="263"/>
    </location>
</feature>
<feature type="domain" description="HTH gntR-type" evidence="1">
    <location>
        <begin position="30"/>
        <end position="98"/>
    </location>
</feature>
<feature type="DNA-binding region" description="H-T-H motif" evidence="1">
    <location>
        <begin position="58"/>
        <end position="77"/>
    </location>
</feature>
<feature type="region of interest" description="Disordered" evidence="2">
    <location>
        <begin position="1"/>
        <end position="25"/>
    </location>
</feature>
<proteinExistence type="inferred from homology"/>
<accession>P67735</accession>
<accession>Q8XFH8</accession>